<name>SEM4D_HUMAN</name>
<evidence type="ECO:0000250" key="1">
    <source>
        <dbReference type="UniProtKB" id="O09126"/>
    </source>
</evidence>
<evidence type="ECO:0000255" key="2"/>
<evidence type="ECO:0000255" key="3">
    <source>
        <dbReference type="PROSITE-ProRule" id="PRU00352"/>
    </source>
</evidence>
<evidence type="ECO:0000256" key="4">
    <source>
        <dbReference type="SAM" id="MobiDB-lite"/>
    </source>
</evidence>
<evidence type="ECO:0000269" key="5">
    <source>
    </source>
</evidence>
<evidence type="ECO:0000269" key="6">
    <source>
    </source>
</evidence>
<evidence type="ECO:0000269" key="7">
    <source>
    </source>
</evidence>
<evidence type="ECO:0000269" key="8">
    <source>
    </source>
</evidence>
<evidence type="ECO:0000269" key="9">
    <source>
    </source>
</evidence>
<evidence type="ECO:0000269" key="10">
    <source>
    </source>
</evidence>
<evidence type="ECO:0000269" key="11">
    <source>
    </source>
</evidence>
<evidence type="ECO:0000305" key="12"/>
<evidence type="ECO:0007744" key="13">
    <source>
    </source>
</evidence>
<evidence type="ECO:0007829" key="14">
    <source>
        <dbReference type="PDB" id="1OLZ"/>
    </source>
</evidence>
<evidence type="ECO:0007829" key="15">
    <source>
        <dbReference type="PDB" id="3OL2"/>
    </source>
</evidence>
<protein>
    <recommendedName>
        <fullName>Semaphorin-4D</fullName>
    </recommendedName>
    <alternativeName>
        <fullName>A8</fullName>
    </alternativeName>
    <alternativeName>
        <fullName>BB18</fullName>
    </alternativeName>
    <alternativeName>
        <fullName>GR3</fullName>
    </alternativeName>
    <cdAntigenName>CD100</cdAntigenName>
</protein>
<gene>
    <name type="primary">SEMA4D</name>
    <name type="synonym">C9orf164</name>
    <name type="synonym">CD100</name>
    <name type="synonym">SEMAJ</name>
</gene>
<proteinExistence type="evidence at protein level"/>
<keyword id="KW-0002">3D-structure</keyword>
<keyword id="KW-0025">Alternative splicing</keyword>
<keyword id="KW-1003">Cell membrane</keyword>
<keyword id="KW-0217">Developmental protein</keyword>
<keyword id="KW-0221">Differentiation</keyword>
<keyword id="KW-1015">Disulfide bond</keyword>
<keyword id="KW-0325">Glycoprotein</keyword>
<keyword id="KW-0393">Immunoglobulin domain</keyword>
<keyword id="KW-0472">Membrane</keyword>
<keyword id="KW-0524">Neurogenesis</keyword>
<keyword id="KW-0597">Phosphoprotein</keyword>
<keyword id="KW-1267">Proteomics identification</keyword>
<keyword id="KW-0675">Receptor</keyword>
<keyword id="KW-1185">Reference proteome</keyword>
<keyword id="KW-0732">Signal</keyword>
<keyword id="KW-0812">Transmembrane</keyword>
<keyword id="KW-1133">Transmembrane helix</keyword>
<feature type="signal peptide" evidence="2">
    <location>
        <begin position="1"/>
        <end position="21"/>
    </location>
</feature>
<feature type="chain" id="PRO_0000032327" description="Semaphorin-4D">
    <location>
        <begin position="22"/>
        <end position="862"/>
    </location>
</feature>
<feature type="topological domain" description="Extracellular" evidence="2">
    <location>
        <begin position="22"/>
        <end position="734"/>
    </location>
</feature>
<feature type="transmembrane region" description="Helical" evidence="2">
    <location>
        <begin position="735"/>
        <end position="755"/>
    </location>
</feature>
<feature type="topological domain" description="Cytoplasmic" evidence="2">
    <location>
        <begin position="756"/>
        <end position="862"/>
    </location>
</feature>
<feature type="domain" description="Sema" evidence="3">
    <location>
        <begin position="22"/>
        <end position="500"/>
    </location>
</feature>
<feature type="domain" description="PSI">
    <location>
        <begin position="502"/>
        <end position="551"/>
    </location>
</feature>
<feature type="domain" description="Ig-like C2-type">
    <location>
        <begin position="554"/>
        <end position="636"/>
    </location>
</feature>
<feature type="region of interest" description="Disordered" evidence="4">
    <location>
        <begin position="794"/>
        <end position="837"/>
    </location>
</feature>
<feature type="compositionally biased region" description="Basic and acidic residues" evidence="4">
    <location>
        <begin position="827"/>
        <end position="837"/>
    </location>
</feature>
<feature type="modified residue" description="Phosphoserine" evidence="13">
    <location>
        <position position="833"/>
    </location>
</feature>
<feature type="glycosylation site" description="N-linked (GlcNAc...) asparagine" evidence="8 10">
    <location>
        <position position="49"/>
    </location>
</feature>
<feature type="glycosylation site" description="N-linked (GlcNAc...) asparagine" evidence="8 10">
    <location>
        <position position="77"/>
    </location>
</feature>
<feature type="glycosylation site" description="N-linked (GlcNAc...) asparagine" evidence="10">
    <location>
        <position position="139"/>
    </location>
</feature>
<feature type="glycosylation site" description="N-linked (GlcNAc...) asparagine" evidence="10">
    <location>
        <position position="191"/>
    </location>
</feature>
<feature type="glycosylation site" description="N-linked (GlcNAc...) asparagine" evidence="10">
    <location>
        <position position="329"/>
    </location>
</feature>
<feature type="glycosylation site" description="N-linked (GlcNAc...) asparagine" evidence="8">
    <location>
        <position position="379"/>
    </location>
</feature>
<feature type="glycosylation site" description="N-linked (GlcNAc...) asparagine" evidence="7 8 10">
    <location>
        <position position="419"/>
    </location>
</feature>
<feature type="glycosylation site" description="N-linked (GlcNAc...) asparagine" evidence="2">
    <location>
        <position position="613"/>
    </location>
</feature>
<feature type="glycosylation site" description="N-linked (GlcNAc...) asparagine" evidence="2">
    <location>
        <position position="632"/>
    </location>
</feature>
<feature type="disulfide bond">
    <location>
        <begin position="97"/>
        <end position="108"/>
    </location>
</feature>
<feature type="disulfide bond">
    <location>
        <begin position="126"/>
        <end position="135"/>
    </location>
</feature>
<feature type="disulfide bond">
    <location>
        <begin position="257"/>
        <end position="370"/>
    </location>
</feature>
<feature type="disulfide bond">
    <location>
        <begin position="281"/>
        <end position="326"/>
    </location>
</feature>
<feature type="disulfide bond">
    <location>
        <begin position="503"/>
        <end position="520"/>
    </location>
</feature>
<feature type="disulfide bond">
    <location>
        <begin position="509"/>
        <end position="553"/>
    </location>
</feature>
<feature type="disulfide bond">
    <location>
        <begin position="512"/>
        <end position="529"/>
    </location>
</feature>
<feature type="disulfide bond">
    <location>
        <begin position="576"/>
        <end position="624"/>
    </location>
</feature>
<feature type="splice variant" id="VSP_039483" description="In isoform 2." evidence="12">
    <original>DKSKGSYRQHFFKHGGTAELKCSQKSNLARVFWKFQNGVLKAESPKYGLMGRKNLLIFNLSEGDSGVYQCLSEERVKNKTVFQVVAKHVLEVKVVPKPVVAPTLSVVQTEGSRIATKVLVASTQGSSPPTPAVQATSSGAITLPPKPAPTGTSCEPKIVINTVPQLHSEKTMYLKSSDNRLLMS</original>
    <variation>ASSPKPLPPPGSSSLSCLGHVGDRRLSSPWTPWPASGAGPDSSSRVSLLPPFLSDQAQHVHALGNFYLFCQATGPADIRFVWEKNGRALETCVPVQTHALPDGRAHALSWLQDAIRESAEYRCSVLSSAGNKTSKVQVAVMRPEVTHQERWTRELSAWRAVAGEHDRMMQSWRKAWESCSKDTL</variation>
    <location>
        <begin position="555"/>
        <end position="738"/>
    </location>
</feature>
<feature type="splice variant" id="VSP_039484" description="In isoform 2." evidence="12">
    <location>
        <begin position="739"/>
        <end position="862"/>
    </location>
</feature>
<feature type="sequence variant" id="VAR_030293" description="In dbSNP:rs13284404.">
    <original>A</original>
    <variation>T</variation>
    <location>
        <position position="72"/>
    </location>
</feature>
<feature type="sequence variant" id="VAR_057175" description="In dbSNP:rs11526468.">
    <original>A</original>
    <variation>T</variation>
    <location>
        <position position="327"/>
    </location>
</feature>
<feature type="mutagenesis site" description="Abolishes PLXNB1 binding." evidence="10">
    <original>KG</original>
    <variation>DT</variation>
    <location>
        <begin position="100"/>
        <end position="101"/>
    </location>
</feature>
<feature type="mutagenesis site" description="Abolishes PLXNB1 binding." evidence="10">
    <original>FL</original>
    <variation>ER</variation>
    <location>
        <begin position="181"/>
        <end position="182"/>
    </location>
</feature>
<feature type="mutagenesis site" description="Abolishes homodimerization, abolishes collapse of growth cones and reduces PLXNB1 binding; when associated with S-246." evidence="10">
    <original>F</original>
    <variation>N</variation>
    <location>
        <position position="244"/>
    </location>
</feature>
<feature type="mutagenesis site" description="Abolishes homodimerization, abolishes collapse of growth cones and reduces PLXNB1 binding; when associated with N-244." evidence="10">
    <original>F</original>
    <variation>S</variation>
    <location>
        <position position="246"/>
    </location>
</feature>
<feature type="mutagenesis site" description="Strongly reduces PLXNB1 binding." evidence="10">
    <original>K</original>
    <variation>E</variation>
    <location>
        <position position="395"/>
    </location>
</feature>
<feature type="sequence conflict" description="In Ref. 3; AAH54500." evidence="12" ref="3">
    <original>G</original>
    <variation>D</variation>
    <location>
        <position position="592"/>
    </location>
</feature>
<feature type="strand" evidence="14">
    <location>
        <begin position="29"/>
        <end position="32"/>
    </location>
</feature>
<feature type="turn" evidence="14">
    <location>
        <begin position="34"/>
        <end position="36"/>
    </location>
</feature>
<feature type="strand" evidence="14">
    <location>
        <begin position="40"/>
        <end position="42"/>
    </location>
</feature>
<feature type="strand" evidence="14">
    <location>
        <begin position="52"/>
        <end position="55"/>
    </location>
</feature>
<feature type="strand" evidence="14">
    <location>
        <begin position="59"/>
        <end position="65"/>
    </location>
</feature>
<feature type="strand" evidence="14">
    <location>
        <begin position="67"/>
        <end position="74"/>
    </location>
</feature>
<feature type="strand" evidence="14">
    <location>
        <begin position="77"/>
        <end position="86"/>
    </location>
</feature>
<feature type="helix" evidence="14">
    <location>
        <begin position="91"/>
        <end position="99"/>
    </location>
</feature>
<feature type="turn" evidence="14">
    <location>
        <begin position="104"/>
        <end position="107"/>
    </location>
</feature>
<feature type="strand" evidence="14">
    <location>
        <begin position="111"/>
        <end position="117"/>
    </location>
</feature>
<feature type="strand" evidence="14">
    <location>
        <begin position="119"/>
        <end position="127"/>
    </location>
</feature>
<feature type="turn" evidence="14">
    <location>
        <begin position="129"/>
        <end position="131"/>
    </location>
</feature>
<feature type="strand" evidence="14">
    <location>
        <begin position="134"/>
        <end position="139"/>
    </location>
</feature>
<feature type="turn" evidence="14">
    <location>
        <begin position="140"/>
        <end position="143"/>
    </location>
</feature>
<feature type="turn" evidence="14">
    <location>
        <begin position="153"/>
        <end position="155"/>
    </location>
</feature>
<feature type="strand" evidence="14">
    <location>
        <begin position="164"/>
        <end position="169"/>
    </location>
</feature>
<feature type="strand" evidence="14">
    <location>
        <begin position="172"/>
        <end position="180"/>
    </location>
</feature>
<feature type="strand" evidence="14">
    <location>
        <begin position="185"/>
        <end position="191"/>
    </location>
</feature>
<feature type="strand" evidence="15">
    <location>
        <begin position="193"/>
        <end position="195"/>
    </location>
</feature>
<feature type="turn" evidence="14">
    <location>
        <begin position="203"/>
        <end position="205"/>
    </location>
</feature>
<feature type="strand" evidence="14">
    <location>
        <begin position="210"/>
        <end position="217"/>
    </location>
</feature>
<feature type="strand" evidence="14">
    <location>
        <begin position="230"/>
        <end position="238"/>
    </location>
</feature>
<feature type="strand" evidence="14">
    <location>
        <begin position="249"/>
        <end position="257"/>
    </location>
</feature>
<feature type="strand" evidence="14">
    <location>
        <begin position="264"/>
        <end position="267"/>
    </location>
</feature>
<feature type="strand" evidence="14">
    <location>
        <begin position="275"/>
        <end position="279"/>
    </location>
</feature>
<feature type="helix" evidence="14">
    <location>
        <begin position="284"/>
        <end position="286"/>
    </location>
</feature>
<feature type="strand" evidence="14">
    <location>
        <begin position="292"/>
        <end position="299"/>
    </location>
</feature>
<feature type="strand" evidence="14">
    <location>
        <begin position="308"/>
        <end position="314"/>
    </location>
</feature>
<feature type="strand" evidence="14">
    <location>
        <begin position="316"/>
        <end position="318"/>
    </location>
</feature>
<feature type="strand" evidence="14">
    <location>
        <begin position="320"/>
        <end position="329"/>
    </location>
</feature>
<feature type="helix" evidence="14">
    <location>
        <begin position="330"/>
        <end position="339"/>
    </location>
</feature>
<feature type="strand" evidence="14">
    <location>
        <begin position="342"/>
        <end position="346"/>
    </location>
</feature>
<feature type="turn" evidence="15">
    <location>
        <begin position="349"/>
        <end position="351"/>
    </location>
</feature>
<feature type="strand" evidence="14">
    <location>
        <begin position="354"/>
        <end position="357"/>
    </location>
</feature>
<feature type="helix" evidence="14">
    <location>
        <begin position="373"/>
        <end position="376"/>
    </location>
</feature>
<feature type="turn" evidence="14">
    <location>
        <begin position="377"/>
        <end position="379"/>
    </location>
</feature>
<feature type="helix" evidence="14">
    <location>
        <begin position="383"/>
        <end position="385"/>
    </location>
</feature>
<feature type="helix" evidence="14">
    <location>
        <begin position="388"/>
        <end position="396"/>
    </location>
</feature>
<feature type="strand" evidence="14">
    <location>
        <begin position="399"/>
        <end position="404"/>
    </location>
</feature>
<feature type="helix" evidence="14">
    <location>
        <begin position="407"/>
        <end position="409"/>
    </location>
</feature>
<feature type="strand" evidence="14">
    <location>
        <begin position="412"/>
        <end position="417"/>
    </location>
</feature>
<feature type="strand" evidence="14">
    <location>
        <begin position="420"/>
        <end position="429"/>
    </location>
</feature>
<feature type="strand" evidence="15">
    <location>
        <begin position="431"/>
        <end position="433"/>
    </location>
</feature>
<feature type="strand" evidence="14">
    <location>
        <begin position="435"/>
        <end position="443"/>
    </location>
</feature>
<feature type="strand" evidence="14">
    <location>
        <begin position="446"/>
        <end position="453"/>
    </location>
</feature>
<feature type="strand" evidence="14">
    <location>
        <begin position="455"/>
        <end position="465"/>
    </location>
</feature>
<feature type="strand" evidence="14">
    <location>
        <begin position="475"/>
        <end position="478"/>
    </location>
</feature>
<feature type="strand" evidence="14">
    <location>
        <begin position="481"/>
        <end position="484"/>
    </location>
</feature>
<feature type="strand" evidence="14">
    <location>
        <begin position="486"/>
        <end position="490"/>
    </location>
</feature>
<feature type="strand" evidence="14">
    <location>
        <begin position="495"/>
        <end position="500"/>
    </location>
</feature>
<feature type="helix" evidence="14">
    <location>
        <begin position="503"/>
        <end position="505"/>
    </location>
</feature>
<feature type="helix" evidence="14">
    <location>
        <begin position="509"/>
        <end position="514"/>
    </location>
</feature>
<feature type="strand" evidence="14">
    <location>
        <begin position="520"/>
        <end position="523"/>
    </location>
</feature>
<feature type="turn" evidence="14">
    <location>
        <begin position="524"/>
        <end position="527"/>
    </location>
</feature>
<feature type="strand" evidence="14">
    <location>
        <begin position="528"/>
        <end position="531"/>
    </location>
</feature>
<feature type="turn" evidence="14">
    <location>
        <begin position="532"/>
        <end position="534"/>
    </location>
</feature>
<feature type="helix" evidence="14">
    <location>
        <begin position="539"/>
        <end position="541"/>
    </location>
</feature>
<feature type="helix" evidence="14">
    <location>
        <begin position="550"/>
        <end position="552"/>
    </location>
</feature>
<feature type="strand" evidence="14">
    <location>
        <begin position="553"/>
        <end position="555"/>
    </location>
</feature>
<feature type="strand" evidence="14">
    <location>
        <begin position="560"/>
        <end position="567"/>
    </location>
</feature>
<feature type="strand" evidence="14">
    <location>
        <begin position="572"/>
        <end position="574"/>
    </location>
</feature>
<feature type="strand" evidence="14">
    <location>
        <begin position="584"/>
        <end position="593"/>
    </location>
</feature>
<feature type="strand" evidence="14">
    <location>
        <begin position="598"/>
        <end position="602"/>
    </location>
</feature>
<feature type="turn" evidence="14">
    <location>
        <begin position="604"/>
        <end position="607"/>
    </location>
</feature>
<feature type="strand" evidence="14">
    <location>
        <begin position="609"/>
        <end position="611"/>
    </location>
</feature>
<feature type="helix" evidence="14">
    <location>
        <begin position="616"/>
        <end position="618"/>
    </location>
</feature>
<feature type="strand" evidence="14">
    <location>
        <begin position="620"/>
        <end position="629"/>
    </location>
</feature>
<feature type="strand" evidence="14">
    <location>
        <begin position="631"/>
        <end position="647"/>
    </location>
</feature>
<accession>Q92854</accession>
<accession>B2RPM6</accession>
<accession>Q7Z5S4</accession>
<accession>Q8N8B0</accession>
<dbReference type="EMBL" id="U60800">
    <property type="protein sequence ID" value="AAC50810.1"/>
    <property type="molecule type" value="mRNA"/>
</dbReference>
<dbReference type="EMBL" id="AL590233">
    <property type="status" value="NOT_ANNOTATED_CDS"/>
    <property type="molecule type" value="Genomic_DNA"/>
</dbReference>
<dbReference type="EMBL" id="AL929575">
    <property type="status" value="NOT_ANNOTATED_CDS"/>
    <property type="molecule type" value="Genomic_DNA"/>
</dbReference>
<dbReference type="EMBL" id="BC054500">
    <property type="protein sequence ID" value="AAH54500.1"/>
    <property type="molecule type" value="mRNA"/>
</dbReference>
<dbReference type="EMBL" id="BC137515">
    <property type="protein sequence ID" value="AAI37516.1"/>
    <property type="status" value="ALT_SEQ"/>
    <property type="molecule type" value="mRNA"/>
</dbReference>
<dbReference type="EMBL" id="BC137518">
    <property type="protein sequence ID" value="AAI37519.1"/>
    <property type="status" value="ALT_SEQ"/>
    <property type="molecule type" value="mRNA"/>
</dbReference>
<dbReference type="EMBL" id="AK097056">
    <property type="protein sequence ID" value="BAC04938.1"/>
    <property type="status" value="ALT_SEQ"/>
    <property type="molecule type" value="mRNA"/>
</dbReference>
<dbReference type="CCDS" id="CCDS47991.1">
    <molecule id="Q92854-2"/>
</dbReference>
<dbReference type="CCDS" id="CCDS6685.1">
    <molecule id="Q92854-1"/>
</dbReference>
<dbReference type="RefSeq" id="NP_001135759.1">
    <molecule id="Q92854-2"/>
    <property type="nucleotide sequence ID" value="NM_001142287.2"/>
</dbReference>
<dbReference type="RefSeq" id="NP_001358123.1">
    <molecule id="Q92854-1"/>
    <property type="nucleotide sequence ID" value="NM_001371194.2"/>
</dbReference>
<dbReference type="RefSeq" id="NP_001358124.1">
    <molecule id="Q92854-1"/>
    <property type="nucleotide sequence ID" value="NM_001371195.1"/>
</dbReference>
<dbReference type="RefSeq" id="NP_001358125.1">
    <molecule id="Q92854-1"/>
    <property type="nucleotide sequence ID" value="NM_001371196.1"/>
</dbReference>
<dbReference type="RefSeq" id="NP_001358126.1">
    <molecule id="Q92854-1"/>
    <property type="nucleotide sequence ID" value="NM_001371197.1"/>
</dbReference>
<dbReference type="RefSeq" id="NP_001358127.1">
    <molecule id="Q92854-2"/>
    <property type="nucleotide sequence ID" value="NM_001371198.1"/>
</dbReference>
<dbReference type="RefSeq" id="NP_001358128.1">
    <molecule id="Q92854-2"/>
    <property type="nucleotide sequence ID" value="NM_001371199.1"/>
</dbReference>
<dbReference type="RefSeq" id="NP_001358129.1">
    <molecule id="Q92854-2"/>
    <property type="nucleotide sequence ID" value="NM_001371200.1"/>
</dbReference>
<dbReference type="RefSeq" id="NP_001358130.1">
    <molecule id="Q92854-2"/>
    <property type="nucleotide sequence ID" value="NM_001371201.1"/>
</dbReference>
<dbReference type="RefSeq" id="NP_006369.3">
    <molecule id="Q92854-1"/>
    <property type="nucleotide sequence ID" value="NM_006378.3"/>
</dbReference>
<dbReference type="RefSeq" id="XP_005251711.1">
    <property type="nucleotide sequence ID" value="XM_005251654.3"/>
</dbReference>
<dbReference type="RefSeq" id="XP_011516425.1">
    <molecule id="Q92854-1"/>
    <property type="nucleotide sequence ID" value="XM_011518123.3"/>
</dbReference>
<dbReference type="RefSeq" id="XP_011516426.1">
    <molecule id="Q92854-1"/>
    <property type="nucleotide sequence ID" value="XM_011518124.3"/>
</dbReference>
<dbReference type="RefSeq" id="XP_011516427.1">
    <molecule id="Q92854-1"/>
    <property type="nucleotide sequence ID" value="XM_011518125.2"/>
</dbReference>
<dbReference type="RefSeq" id="XP_011516429.1">
    <molecule id="Q92854-1"/>
    <property type="nucleotide sequence ID" value="XM_011518127.3"/>
</dbReference>
<dbReference type="RefSeq" id="XP_011516430.1">
    <molecule id="Q92854-1"/>
    <property type="nucleotide sequence ID" value="XM_011518128.3"/>
</dbReference>
<dbReference type="RefSeq" id="XP_011516431.1">
    <molecule id="Q92854-1"/>
    <property type="nucleotide sequence ID" value="XM_011518129.2"/>
</dbReference>
<dbReference type="RefSeq" id="XP_011516432.1">
    <molecule id="Q92854-1"/>
    <property type="nucleotide sequence ID" value="XM_011518130.3"/>
</dbReference>
<dbReference type="RefSeq" id="XP_011516433.1">
    <molecule id="Q92854-1"/>
    <property type="nucleotide sequence ID" value="XM_011518131.3"/>
</dbReference>
<dbReference type="RefSeq" id="XP_011516435.1">
    <molecule id="Q92854-1"/>
    <property type="nucleotide sequence ID" value="XM_011518133.3"/>
</dbReference>
<dbReference type="RefSeq" id="XP_011516436.1">
    <molecule id="Q92854-1"/>
    <property type="nucleotide sequence ID" value="XM_011518134.3"/>
</dbReference>
<dbReference type="RefSeq" id="XP_016869682.1">
    <molecule id="Q92854-1"/>
    <property type="nucleotide sequence ID" value="XM_017014193.3"/>
</dbReference>
<dbReference type="RefSeq" id="XP_016869683.1">
    <molecule id="Q92854-1"/>
    <property type="nucleotide sequence ID" value="XM_017014194.2"/>
</dbReference>
<dbReference type="RefSeq" id="XP_016869684.1">
    <molecule id="Q92854-1"/>
    <property type="nucleotide sequence ID" value="XM_017014195.2"/>
</dbReference>
<dbReference type="RefSeq" id="XP_016869685.1">
    <property type="nucleotide sequence ID" value="XM_017014196.1"/>
</dbReference>
<dbReference type="RefSeq" id="XP_016869686.1">
    <property type="nucleotide sequence ID" value="XM_017014197.1"/>
</dbReference>
<dbReference type="RefSeq" id="XP_016869687.1">
    <molecule id="Q92854-1"/>
    <property type="nucleotide sequence ID" value="XM_017014198.2"/>
</dbReference>
<dbReference type="RefSeq" id="XP_047278562.1">
    <molecule id="Q92854-1"/>
    <property type="nucleotide sequence ID" value="XM_047422606.1"/>
</dbReference>
<dbReference type="RefSeq" id="XP_047278563.1">
    <molecule id="Q92854-1"/>
    <property type="nucleotide sequence ID" value="XM_047422607.1"/>
</dbReference>
<dbReference type="RefSeq" id="XP_047278565.1">
    <molecule id="Q92854-1"/>
    <property type="nucleotide sequence ID" value="XM_047422609.1"/>
</dbReference>
<dbReference type="RefSeq" id="XP_047278566.1">
    <molecule id="Q92854-1"/>
    <property type="nucleotide sequence ID" value="XM_047422610.1"/>
</dbReference>
<dbReference type="RefSeq" id="XP_047278567.1">
    <molecule id="Q92854-1"/>
    <property type="nucleotide sequence ID" value="XM_047422611.1"/>
</dbReference>
<dbReference type="RefSeq" id="XP_047278568.1">
    <molecule id="Q92854-1"/>
    <property type="nucleotide sequence ID" value="XM_047422612.1"/>
</dbReference>
<dbReference type="RefSeq" id="XP_047278569.1">
    <molecule id="Q92854-1"/>
    <property type="nucleotide sequence ID" value="XM_047422613.1"/>
</dbReference>
<dbReference type="RefSeq" id="XP_047278570.1">
    <molecule id="Q92854-1"/>
    <property type="nucleotide sequence ID" value="XM_047422614.1"/>
</dbReference>
<dbReference type="RefSeq" id="XP_047278571.1">
    <molecule id="Q92854-1"/>
    <property type="nucleotide sequence ID" value="XM_047422615.1"/>
</dbReference>
<dbReference type="RefSeq" id="XP_047278573.1">
    <molecule id="Q92854-1"/>
    <property type="nucleotide sequence ID" value="XM_047422617.1"/>
</dbReference>
<dbReference type="RefSeq" id="XP_047278574.1">
    <molecule id="Q92854-1"/>
    <property type="nucleotide sequence ID" value="XM_047422618.1"/>
</dbReference>
<dbReference type="RefSeq" id="XP_047278575.1">
    <molecule id="Q92854-1"/>
    <property type="nucleotide sequence ID" value="XM_047422619.1"/>
</dbReference>
<dbReference type="RefSeq" id="XP_047278580.1">
    <molecule id="Q92854-2"/>
    <property type="nucleotide sequence ID" value="XM_047422624.1"/>
</dbReference>
<dbReference type="RefSeq" id="XP_047278581.1">
    <molecule id="Q92854-2"/>
    <property type="nucleotide sequence ID" value="XM_047422625.1"/>
</dbReference>
<dbReference type="RefSeq" id="XP_047278582.1">
    <molecule id="Q92854-2"/>
    <property type="nucleotide sequence ID" value="XM_047422626.1"/>
</dbReference>
<dbReference type="RefSeq" id="XP_047278583.1">
    <molecule id="Q92854-2"/>
    <property type="nucleotide sequence ID" value="XM_047422627.1"/>
</dbReference>
<dbReference type="RefSeq" id="XP_047278584.1">
    <molecule id="Q92854-2"/>
    <property type="nucleotide sequence ID" value="XM_047422628.1"/>
</dbReference>
<dbReference type="RefSeq" id="XP_054217691.1">
    <molecule id="Q92854-1"/>
    <property type="nucleotide sequence ID" value="XM_054361716.1"/>
</dbReference>
<dbReference type="RefSeq" id="XP_054217692.1">
    <molecule id="Q92854-1"/>
    <property type="nucleotide sequence ID" value="XM_054361717.1"/>
</dbReference>
<dbReference type="RefSeq" id="XP_054217693.1">
    <molecule id="Q92854-1"/>
    <property type="nucleotide sequence ID" value="XM_054361718.1"/>
</dbReference>
<dbReference type="RefSeq" id="XP_054217694.1">
    <molecule id="Q92854-1"/>
    <property type="nucleotide sequence ID" value="XM_054361719.1"/>
</dbReference>
<dbReference type="RefSeq" id="XP_054217695.1">
    <molecule id="Q92854-1"/>
    <property type="nucleotide sequence ID" value="XM_054361720.1"/>
</dbReference>
<dbReference type="RefSeq" id="XP_054217696.1">
    <molecule id="Q92854-1"/>
    <property type="nucleotide sequence ID" value="XM_054361721.1"/>
</dbReference>
<dbReference type="RefSeq" id="XP_054217697.1">
    <molecule id="Q92854-1"/>
    <property type="nucleotide sequence ID" value="XM_054361722.1"/>
</dbReference>
<dbReference type="RefSeq" id="XP_054217698.1">
    <molecule id="Q92854-1"/>
    <property type="nucleotide sequence ID" value="XM_054361723.1"/>
</dbReference>
<dbReference type="RefSeq" id="XP_054217699.1">
    <molecule id="Q92854-1"/>
    <property type="nucleotide sequence ID" value="XM_054361724.1"/>
</dbReference>
<dbReference type="RefSeq" id="XP_054217700.1">
    <molecule id="Q92854-1"/>
    <property type="nucleotide sequence ID" value="XM_054361725.1"/>
</dbReference>
<dbReference type="RefSeq" id="XP_054217701.1">
    <molecule id="Q92854-1"/>
    <property type="nucleotide sequence ID" value="XM_054361726.1"/>
</dbReference>
<dbReference type="RefSeq" id="XP_054217702.1">
    <molecule id="Q92854-1"/>
    <property type="nucleotide sequence ID" value="XM_054361727.1"/>
</dbReference>
<dbReference type="RefSeq" id="XP_054217703.1">
    <molecule id="Q92854-1"/>
    <property type="nucleotide sequence ID" value="XM_054361728.1"/>
</dbReference>
<dbReference type="RefSeq" id="XP_054217704.1">
    <molecule id="Q92854-1"/>
    <property type="nucleotide sequence ID" value="XM_054361729.1"/>
</dbReference>
<dbReference type="RefSeq" id="XP_054217705.1">
    <molecule id="Q92854-1"/>
    <property type="nucleotide sequence ID" value="XM_054361730.1"/>
</dbReference>
<dbReference type="RefSeq" id="XP_054217706.1">
    <molecule id="Q92854-1"/>
    <property type="nucleotide sequence ID" value="XM_054361731.1"/>
</dbReference>
<dbReference type="RefSeq" id="XP_054217707.1">
    <molecule id="Q92854-1"/>
    <property type="nucleotide sequence ID" value="XM_054361732.1"/>
</dbReference>
<dbReference type="RefSeq" id="XP_054217708.1">
    <molecule id="Q92854-1"/>
    <property type="nucleotide sequence ID" value="XM_054361733.1"/>
</dbReference>
<dbReference type="RefSeq" id="XP_054217709.1">
    <molecule id="Q92854-1"/>
    <property type="nucleotide sequence ID" value="XM_054361734.1"/>
</dbReference>
<dbReference type="RefSeq" id="XP_054217710.1">
    <molecule id="Q92854-1"/>
    <property type="nucleotide sequence ID" value="XM_054361735.1"/>
</dbReference>
<dbReference type="RefSeq" id="XP_054217711.1">
    <molecule id="Q92854-1"/>
    <property type="nucleotide sequence ID" value="XM_054361736.1"/>
</dbReference>
<dbReference type="RefSeq" id="XP_054217712.1">
    <molecule id="Q92854-1"/>
    <property type="nucleotide sequence ID" value="XM_054361737.1"/>
</dbReference>
<dbReference type="RefSeq" id="XP_054217713.1">
    <molecule id="Q92854-1"/>
    <property type="nucleotide sequence ID" value="XM_054361738.1"/>
</dbReference>
<dbReference type="RefSeq" id="XP_054217714.1">
    <molecule id="Q92854-1"/>
    <property type="nucleotide sequence ID" value="XM_054361739.1"/>
</dbReference>
<dbReference type="RefSeq" id="XP_054217719.1">
    <molecule id="Q92854-2"/>
    <property type="nucleotide sequence ID" value="XM_054361744.1"/>
</dbReference>
<dbReference type="RefSeq" id="XP_054217720.1">
    <molecule id="Q92854-2"/>
    <property type="nucleotide sequence ID" value="XM_054361745.1"/>
</dbReference>
<dbReference type="RefSeq" id="XP_054217721.1">
    <molecule id="Q92854-2"/>
    <property type="nucleotide sequence ID" value="XM_054361746.1"/>
</dbReference>
<dbReference type="RefSeq" id="XP_054217722.1">
    <molecule id="Q92854-2"/>
    <property type="nucleotide sequence ID" value="XM_054361747.1"/>
</dbReference>
<dbReference type="RefSeq" id="XP_054217723.1">
    <molecule id="Q92854-2"/>
    <property type="nucleotide sequence ID" value="XM_054361748.1"/>
</dbReference>
<dbReference type="PDB" id="1OLZ">
    <property type="method" value="X-ray"/>
    <property type="resolution" value="2.00 A"/>
    <property type="chains" value="A/B=22-677"/>
</dbReference>
<dbReference type="PDB" id="3OL2">
    <property type="method" value="X-ray"/>
    <property type="resolution" value="2.99 A"/>
    <property type="chains" value="A=22-677"/>
</dbReference>
<dbReference type="PDBsum" id="1OLZ"/>
<dbReference type="PDBsum" id="3OL2"/>
<dbReference type="SMR" id="Q92854"/>
<dbReference type="BioGRID" id="115766">
    <property type="interactions" value="32"/>
</dbReference>
<dbReference type="CORUM" id="Q92854"/>
<dbReference type="DIP" id="DIP-59221N"/>
<dbReference type="FunCoup" id="Q92854">
    <property type="interactions" value="574"/>
</dbReference>
<dbReference type="IntAct" id="Q92854">
    <property type="interactions" value="22"/>
</dbReference>
<dbReference type="MINT" id="Q92854"/>
<dbReference type="STRING" id="9606.ENSP00000416523"/>
<dbReference type="ChEMBL" id="CHEMBL4630887"/>
<dbReference type="GuidetoPHARMACOLOGY" id="2883"/>
<dbReference type="GlyConnect" id="1734">
    <property type="glycosylation" value="13 N-Linked glycans (4 sites)"/>
</dbReference>
<dbReference type="GlyCosmos" id="Q92854">
    <property type="glycosylation" value="11 sites, 14 glycans"/>
</dbReference>
<dbReference type="GlyGen" id="Q92854">
    <property type="glycosylation" value="20 sites, 38 N-linked glycans (5 sites), 3 O-linked glycans (9 sites)"/>
</dbReference>
<dbReference type="iPTMnet" id="Q92854"/>
<dbReference type="PhosphoSitePlus" id="Q92854"/>
<dbReference type="SwissPalm" id="Q92854"/>
<dbReference type="BioMuta" id="SEMA4D"/>
<dbReference type="DMDM" id="8134701"/>
<dbReference type="jPOST" id="Q92854"/>
<dbReference type="MassIVE" id="Q92854"/>
<dbReference type="PaxDb" id="9606-ENSP00000416523"/>
<dbReference type="PeptideAtlas" id="Q92854"/>
<dbReference type="ProteomicsDB" id="75549">
    <molecule id="Q92854-1"/>
</dbReference>
<dbReference type="ProteomicsDB" id="75550">
    <molecule id="Q92854-2"/>
</dbReference>
<dbReference type="ABCD" id="Q92854">
    <property type="antibodies" value="20 sequenced antibodies"/>
</dbReference>
<dbReference type="Antibodypedia" id="3064">
    <property type="antibodies" value="973 antibodies from 41 providers"/>
</dbReference>
<dbReference type="DNASU" id="10507"/>
<dbReference type="Ensembl" id="ENST00000339861.8">
    <molecule id="Q92854-2"/>
    <property type="protein sequence ID" value="ENSP00000344923.4"/>
    <property type="gene ID" value="ENSG00000187764.12"/>
</dbReference>
<dbReference type="Ensembl" id="ENST00000356444.6">
    <molecule id="Q92854-1"/>
    <property type="protein sequence ID" value="ENSP00000348822.2"/>
    <property type="gene ID" value="ENSG00000187764.12"/>
</dbReference>
<dbReference type="Ensembl" id="ENST00000420987.5">
    <molecule id="Q92854-2"/>
    <property type="protein sequence ID" value="ENSP00000391733.1"/>
    <property type="gene ID" value="ENSG00000187764.12"/>
</dbReference>
<dbReference type="Ensembl" id="ENST00000422704.7">
    <molecule id="Q92854-1"/>
    <property type="protein sequence ID" value="ENSP00000388768.2"/>
    <property type="gene ID" value="ENSG00000187764.12"/>
</dbReference>
<dbReference type="Ensembl" id="ENST00000438547.6">
    <molecule id="Q92854-1"/>
    <property type="protein sequence ID" value="ENSP00000405102.2"/>
    <property type="gene ID" value="ENSG00000187764.12"/>
</dbReference>
<dbReference type="Ensembl" id="ENST00000450295.5">
    <molecule id="Q92854-1"/>
    <property type="protein sequence ID" value="ENSP00000416523.1"/>
    <property type="gene ID" value="ENSG00000187764.12"/>
</dbReference>
<dbReference type="Ensembl" id="ENST00000455551.6">
    <molecule id="Q92854-2"/>
    <property type="protein sequence ID" value="ENSP00000411981.2"/>
    <property type="gene ID" value="ENSG00000187764.12"/>
</dbReference>
<dbReference type="GeneID" id="10507"/>
<dbReference type="KEGG" id="hsa:10507"/>
<dbReference type="MANE-Select" id="ENST00000422704.7">
    <property type="protein sequence ID" value="ENSP00000388768.2"/>
    <property type="RefSeq nucleotide sequence ID" value="NM_001371194.2"/>
    <property type="RefSeq protein sequence ID" value="NP_001358123.1"/>
</dbReference>
<dbReference type="UCSC" id="uc004aqo.2">
    <molecule id="Q92854-1"/>
    <property type="organism name" value="human"/>
</dbReference>
<dbReference type="AGR" id="HGNC:10732"/>
<dbReference type="CTD" id="10507"/>
<dbReference type="DisGeNET" id="10507"/>
<dbReference type="GeneCards" id="SEMA4D"/>
<dbReference type="HGNC" id="HGNC:10732">
    <property type="gene designation" value="SEMA4D"/>
</dbReference>
<dbReference type="HPA" id="ENSG00000187764">
    <property type="expression patterns" value="Tissue enhanced (brain)"/>
</dbReference>
<dbReference type="MalaCards" id="SEMA4D"/>
<dbReference type="MIM" id="601866">
    <property type="type" value="gene"/>
</dbReference>
<dbReference type="neXtProt" id="NX_Q92854"/>
<dbReference type="OpenTargets" id="ENSG00000187764"/>
<dbReference type="Orphanet" id="171">
    <property type="disease" value="Primary sclerosing cholangitis"/>
</dbReference>
<dbReference type="PharmGKB" id="PA35654"/>
<dbReference type="VEuPathDB" id="HostDB:ENSG00000187764"/>
<dbReference type="eggNOG" id="KOG3611">
    <property type="taxonomic scope" value="Eukaryota"/>
</dbReference>
<dbReference type="GeneTree" id="ENSGT00940000159594"/>
<dbReference type="HOGENOM" id="CLU_009051_4_0_1"/>
<dbReference type="InParanoid" id="Q92854"/>
<dbReference type="OMA" id="PSRGWIQ"/>
<dbReference type="OrthoDB" id="9988752at2759"/>
<dbReference type="PAN-GO" id="Q92854">
    <property type="GO annotations" value="14 GO annotations based on evolutionary models"/>
</dbReference>
<dbReference type="PhylomeDB" id="Q92854"/>
<dbReference type="TreeFam" id="TF316102"/>
<dbReference type="PathwayCommons" id="Q92854"/>
<dbReference type="Reactome" id="R-HSA-416550">
    <property type="pathway name" value="Sema4D mediated inhibition of cell attachment and migration"/>
</dbReference>
<dbReference type="Reactome" id="R-HSA-416572">
    <property type="pathway name" value="Sema4D induced cell migration and growth-cone collapse"/>
</dbReference>
<dbReference type="Reactome" id="R-HSA-416700">
    <property type="pathway name" value="Other semaphorin interactions"/>
</dbReference>
<dbReference type="SignaLink" id="Q92854"/>
<dbReference type="SIGNOR" id="Q92854"/>
<dbReference type="BioGRID-ORCS" id="10507">
    <property type="hits" value="10 hits in 1149 CRISPR screens"/>
</dbReference>
<dbReference type="ChiTaRS" id="SEMA4D">
    <property type="organism name" value="human"/>
</dbReference>
<dbReference type="EvolutionaryTrace" id="Q92854"/>
<dbReference type="GeneWiki" id="SEMA4D"/>
<dbReference type="GenomeRNAi" id="10507"/>
<dbReference type="Pharos" id="Q92854">
    <property type="development level" value="Tbio"/>
</dbReference>
<dbReference type="PRO" id="PR:Q92854"/>
<dbReference type="Proteomes" id="UP000005640">
    <property type="component" value="Chromosome 9"/>
</dbReference>
<dbReference type="RNAct" id="Q92854">
    <property type="molecule type" value="protein"/>
</dbReference>
<dbReference type="Bgee" id="ENSG00000187764">
    <property type="expression patterns" value="Expressed in C1 segment of cervical spinal cord and 182 other cell types or tissues"/>
</dbReference>
<dbReference type="ExpressionAtlas" id="Q92854">
    <property type="expression patterns" value="baseline and differential"/>
</dbReference>
<dbReference type="GO" id="GO:0005813">
    <property type="term" value="C:centrosome"/>
    <property type="evidence" value="ECO:0000314"/>
    <property type="project" value="HPA"/>
</dbReference>
<dbReference type="GO" id="GO:0036064">
    <property type="term" value="C:ciliary basal body"/>
    <property type="evidence" value="ECO:0000314"/>
    <property type="project" value="HPA"/>
</dbReference>
<dbReference type="GO" id="GO:0005615">
    <property type="term" value="C:extracellular space"/>
    <property type="evidence" value="ECO:0000250"/>
    <property type="project" value="BHF-UCL"/>
</dbReference>
<dbReference type="GO" id="GO:0098982">
    <property type="term" value="C:GABA-ergic synapse"/>
    <property type="evidence" value="ECO:0007669"/>
    <property type="project" value="Ensembl"/>
</dbReference>
<dbReference type="GO" id="GO:0043231">
    <property type="term" value="C:intracellular membrane-bounded organelle"/>
    <property type="evidence" value="ECO:0000314"/>
    <property type="project" value="HPA"/>
</dbReference>
<dbReference type="GO" id="GO:0005654">
    <property type="term" value="C:nucleoplasm"/>
    <property type="evidence" value="ECO:0000314"/>
    <property type="project" value="HPA"/>
</dbReference>
<dbReference type="GO" id="GO:0005886">
    <property type="term" value="C:plasma membrane"/>
    <property type="evidence" value="ECO:0000314"/>
    <property type="project" value="HPA"/>
</dbReference>
<dbReference type="GO" id="GO:0045211">
    <property type="term" value="C:postsynaptic membrane"/>
    <property type="evidence" value="ECO:0007669"/>
    <property type="project" value="Ensembl"/>
</dbReference>
<dbReference type="GO" id="GO:0002116">
    <property type="term" value="C:semaphorin receptor complex"/>
    <property type="evidence" value="ECO:0000250"/>
    <property type="project" value="BHF-UCL"/>
</dbReference>
<dbReference type="GO" id="GO:0045499">
    <property type="term" value="F:chemorepellent activity"/>
    <property type="evidence" value="ECO:0000318"/>
    <property type="project" value="GO_Central"/>
</dbReference>
<dbReference type="GO" id="GO:0042802">
    <property type="term" value="F:identical protein binding"/>
    <property type="evidence" value="ECO:0000353"/>
    <property type="project" value="IntAct"/>
</dbReference>
<dbReference type="GO" id="GO:0038191">
    <property type="term" value="F:neuropilin binding"/>
    <property type="evidence" value="ECO:0000318"/>
    <property type="project" value="GO_Central"/>
</dbReference>
<dbReference type="GO" id="GO:0048018">
    <property type="term" value="F:receptor ligand activity"/>
    <property type="evidence" value="ECO:0000250"/>
    <property type="project" value="BHF-UCL"/>
</dbReference>
<dbReference type="GO" id="GO:0030215">
    <property type="term" value="F:semaphorin receptor binding"/>
    <property type="evidence" value="ECO:0000353"/>
    <property type="project" value="UniProtKB"/>
</dbReference>
<dbReference type="GO" id="GO:0038023">
    <property type="term" value="F:signaling receptor activity"/>
    <property type="evidence" value="ECO:0000314"/>
    <property type="project" value="HGNC-UCL"/>
</dbReference>
<dbReference type="GO" id="GO:0005102">
    <property type="term" value="F:signaling receptor binding"/>
    <property type="evidence" value="ECO:0000314"/>
    <property type="project" value="UniProtKB"/>
</dbReference>
<dbReference type="GO" id="GO:0004888">
    <property type="term" value="F:transmembrane signaling receptor activity"/>
    <property type="evidence" value="ECO:0000315"/>
    <property type="project" value="UniProtKB"/>
</dbReference>
<dbReference type="GO" id="GO:0007411">
    <property type="term" value="P:axon guidance"/>
    <property type="evidence" value="ECO:0000318"/>
    <property type="project" value="GO_Central"/>
</dbReference>
<dbReference type="GO" id="GO:0061430">
    <property type="term" value="P:bone trabecula morphogenesis"/>
    <property type="evidence" value="ECO:0000250"/>
    <property type="project" value="BHF-UCL"/>
</dbReference>
<dbReference type="GO" id="GO:0007155">
    <property type="term" value="P:cell adhesion"/>
    <property type="evidence" value="ECO:0000304"/>
    <property type="project" value="ProtInc"/>
</dbReference>
<dbReference type="GO" id="GO:0006955">
    <property type="term" value="P:immune response"/>
    <property type="evidence" value="ECO:0000304"/>
    <property type="project" value="ProtInc"/>
</dbReference>
<dbReference type="GO" id="GO:0070486">
    <property type="term" value="P:leukocyte aggregation"/>
    <property type="evidence" value="ECO:0000315"/>
    <property type="project" value="UniProtKB"/>
</dbReference>
<dbReference type="GO" id="GO:0050919">
    <property type="term" value="P:negative chemotaxis"/>
    <property type="evidence" value="ECO:0000318"/>
    <property type="project" value="GO_Central"/>
</dbReference>
<dbReference type="GO" id="GO:0043066">
    <property type="term" value="P:negative regulation of apoptotic process"/>
    <property type="evidence" value="ECO:0000304"/>
    <property type="project" value="ProtInc"/>
</dbReference>
<dbReference type="GO" id="GO:0007162">
    <property type="term" value="P:negative regulation of cell adhesion"/>
    <property type="evidence" value="ECO:0000314"/>
    <property type="project" value="UniProtKB"/>
</dbReference>
<dbReference type="GO" id="GO:0045668">
    <property type="term" value="P:negative regulation of osteoblast differentiation"/>
    <property type="evidence" value="ECO:0000250"/>
    <property type="project" value="BHF-UCL"/>
</dbReference>
<dbReference type="GO" id="GO:0000122">
    <property type="term" value="P:negative regulation of transcription by RNA polymerase II"/>
    <property type="evidence" value="ECO:0000315"/>
    <property type="project" value="BHF-UCL"/>
</dbReference>
<dbReference type="GO" id="GO:0001755">
    <property type="term" value="P:neural crest cell migration"/>
    <property type="evidence" value="ECO:0000318"/>
    <property type="project" value="GO_Central"/>
</dbReference>
<dbReference type="GO" id="GO:0043931">
    <property type="term" value="P:ossification involved in bone maturation"/>
    <property type="evidence" value="ECO:0000315"/>
    <property type="project" value="BHF-UCL"/>
</dbReference>
<dbReference type="GO" id="GO:0030335">
    <property type="term" value="P:positive regulation of cell migration"/>
    <property type="evidence" value="ECO:0000314"/>
    <property type="project" value="UniProtKB"/>
</dbReference>
<dbReference type="GO" id="GO:0048672">
    <property type="term" value="P:positive regulation of collateral sprouting"/>
    <property type="evidence" value="ECO:0000315"/>
    <property type="project" value="UniProtKB"/>
</dbReference>
<dbReference type="GO" id="GO:0043547">
    <property type="term" value="P:positive regulation of GTPase activity"/>
    <property type="evidence" value="ECO:0000315"/>
    <property type="project" value="UniProtKB"/>
</dbReference>
<dbReference type="GO" id="GO:1905704">
    <property type="term" value="P:positive regulation of inhibitory synapse assembly"/>
    <property type="evidence" value="ECO:0000250"/>
    <property type="project" value="UniProtKB"/>
</dbReference>
<dbReference type="GO" id="GO:0051897">
    <property type="term" value="P:positive regulation of phosphatidylinositol 3-kinase/protein kinase B signal transduction"/>
    <property type="evidence" value="ECO:0000315"/>
    <property type="project" value="UniProtKB"/>
</dbReference>
<dbReference type="GO" id="GO:0001934">
    <property type="term" value="P:positive regulation of protein phosphorylation"/>
    <property type="evidence" value="ECO:0000314"/>
    <property type="project" value="UniProtKB"/>
</dbReference>
<dbReference type="GO" id="GO:0035025">
    <property type="term" value="P:positive regulation of Rho protein signal transduction"/>
    <property type="evidence" value="ECO:0000250"/>
    <property type="project" value="BHF-UCL"/>
</dbReference>
<dbReference type="GO" id="GO:0031344">
    <property type="term" value="P:regulation of cell projection organization"/>
    <property type="evidence" value="ECO:0000315"/>
    <property type="project" value="UniProtKB"/>
</dbReference>
<dbReference type="GO" id="GO:0008360">
    <property type="term" value="P:regulation of cell shape"/>
    <property type="evidence" value="ECO:0000315"/>
    <property type="project" value="UniProtKB"/>
</dbReference>
<dbReference type="GO" id="GO:0048814">
    <property type="term" value="P:regulation of dendrite morphogenesis"/>
    <property type="evidence" value="ECO:0000315"/>
    <property type="project" value="UniProtKB"/>
</dbReference>
<dbReference type="GO" id="GO:0071526">
    <property type="term" value="P:semaphorin-plexin signaling pathway"/>
    <property type="evidence" value="ECO:0000314"/>
    <property type="project" value="UniProtKB"/>
</dbReference>
<dbReference type="CDD" id="cd05873">
    <property type="entry name" value="Ig_Sema4D_like"/>
    <property type="match status" value="1"/>
</dbReference>
<dbReference type="CDD" id="cd11259">
    <property type="entry name" value="Sema_4D"/>
    <property type="match status" value="1"/>
</dbReference>
<dbReference type="FunFam" id="2.130.10.10:FF:000120">
    <property type="entry name" value="Semaphorin 4D"/>
    <property type="match status" value="1"/>
</dbReference>
<dbReference type="FunFam" id="3.30.1680.10:FF:000013">
    <property type="entry name" value="Semaphorin 4D"/>
    <property type="match status" value="1"/>
</dbReference>
<dbReference type="FunFam" id="2.60.40.10:FF:000647">
    <property type="entry name" value="Semaphorin-4D"/>
    <property type="match status" value="1"/>
</dbReference>
<dbReference type="Gene3D" id="2.60.40.10">
    <property type="entry name" value="Immunoglobulins"/>
    <property type="match status" value="1"/>
</dbReference>
<dbReference type="Gene3D" id="3.30.1680.10">
    <property type="entry name" value="ligand-binding face of the semaphorins, domain 2"/>
    <property type="match status" value="1"/>
</dbReference>
<dbReference type="Gene3D" id="2.130.10.10">
    <property type="entry name" value="YVTN repeat-like/Quinoprotein amine dehydrogenase"/>
    <property type="match status" value="1"/>
</dbReference>
<dbReference type="InterPro" id="IPR007110">
    <property type="entry name" value="Ig-like_dom"/>
</dbReference>
<dbReference type="InterPro" id="IPR036179">
    <property type="entry name" value="Ig-like_dom_sf"/>
</dbReference>
<dbReference type="InterPro" id="IPR013783">
    <property type="entry name" value="Ig-like_fold"/>
</dbReference>
<dbReference type="InterPro" id="IPR003599">
    <property type="entry name" value="Ig_sub"/>
</dbReference>
<dbReference type="InterPro" id="IPR003598">
    <property type="entry name" value="Ig_sub2"/>
</dbReference>
<dbReference type="InterPro" id="IPR013151">
    <property type="entry name" value="Immunoglobulin_dom"/>
</dbReference>
<dbReference type="InterPro" id="IPR002165">
    <property type="entry name" value="Plexin_repeat"/>
</dbReference>
<dbReference type="InterPro" id="IPR016201">
    <property type="entry name" value="PSI"/>
</dbReference>
<dbReference type="InterPro" id="IPR001627">
    <property type="entry name" value="Semap_dom"/>
</dbReference>
<dbReference type="InterPro" id="IPR036352">
    <property type="entry name" value="Semap_dom_sf"/>
</dbReference>
<dbReference type="InterPro" id="IPR027231">
    <property type="entry name" value="Semaphorin"/>
</dbReference>
<dbReference type="InterPro" id="IPR015943">
    <property type="entry name" value="WD40/YVTN_repeat-like_dom_sf"/>
</dbReference>
<dbReference type="PANTHER" id="PTHR11036">
    <property type="entry name" value="SEMAPHORIN"/>
    <property type="match status" value="1"/>
</dbReference>
<dbReference type="PANTHER" id="PTHR11036:SF18">
    <property type="entry name" value="SEMAPHORIN-4D"/>
    <property type="match status" value="1"/>
</dbReference>
<dbReference type="Pfam" id="PF00047">
    <property type="entry name" value="ig"/>
    <property type="match status" value="1"/>
</dbReference>
<dbReference type="Pfam" id="PF01437">
    <property type="entry name" value="PSI"/>
    <property type="match status" value="1"/>
</dbReference>
<dbReference type="Pfam" id="PF01403">
    <property type="entry name" value="Sema"/>
    <property type="match status" value="1"/>
</dbReference>
<dbReference type="SMART" id="SM00409">
    <property type="entry name" value="IG"/>
    <property type="match status" value="1"/>
</dbReference>
<dbReference type="SMART" id="SM00408">
    <property type="entry name" value="IGc2"/>
    <property type="match status" value="1"/>
</dbReference>
<dbReference type="SMART" id="SM00423">
    <property type="entry name" value="PSI"/>
    <property type="match status" value="1"/>
</dbReference>
<dbReference type="SMART" id="SM00630">
    <property type="entry name" value="Sema"/>
    <property type="match status" value="1"/>
</dbReference>
<dbReference type="SUPFAM" id="SSF48726">
    <property type="entry name" value="Immunoglobulin"/>
    <property type="match status" value="1"/>
</dbReference>
<dbReference type="SUPFAM" id="SSF103575">
    <property type="entry name" value="Plexin repeat"/>
    <property type="match status" value="1"/>
</dbReference>
<dbReference type="SUPFAM" id="SSF101912">
    <property type="entry name" value="Sema domain"/>
    <property type="match status" value="1"/>
</dbReference>
<dbReference type="PROSITE" id="PS50835">
    <property type="entry name" value="IG_LIKE"/>
    <property type="match status" value="1"/>
</dbReference>
<dbReference type="PROSITE" id="PS51004">
    <property type="entry name" value="SEMA"/>
    <property type="match status" value="1"/>
</dbReference>
<comment type="function">
    <text evidence="1 6 9 10 11">Cell surface receptor for PLXNB1 and PLXNB2 that plays an important role in cell-cell signaling (PubMed:20877282). Regulates GABAergic synapse development (By similarity). Promotes the development of inhibitory synapses in a PLXNB1-dependent manner (By similarity). Modulates the complexity and arborization of developing neurites in hippocampal neurons by activating PLXNB1 and interaction with PLXNB1 mediates activation of RHOA (PubMed:19788569). Promotes the migration of cerebellar granule cells (PubMed:16055703). Plays a role in the immune system; induces B-cells to aggregate and improves their viability (in vitro) (PubMed:8876214). Induces endothelial cell migration through the activation of PTK2B/PYK2, SRC, and the phosphatidylinositol 3-kinase-AKT pathway (PubMed:16055703).</text>
</comment>
<comment type="subunit">
    <text evidence="1 5 10">Homodimer (PubMed:20877282). Interacts with PLXNB2 (By similarity). Interacts with PLXNB1 (PubMed:10520995).</text>
</comment>
<comment type="interaction">
    <interactant intactId="EBI-15880903">
        <id>Q92854-1</id>
    </interactant>
    <interactant intactId="EBI-15880891">
        <id>O43157-1</id>
        <label>PLXNB1</label>
    </interactant>
    <organismsDiffer>false</organismsDiffer>
    <experiments>3</experiments>
</comment>
<comment type="interaction">
    <interactant intactId="EBI-15880903">
        <id>Q92854-1</id>
    </interactant>
    <interactant intactId="EBI-15880903">
        <id>Q92854-1</id>
        <label>SEMA4D</label>
    </interactant>
    <organismsDiffer>false</organismsDiffer>
    <experiments>3</experiments>
</comment>
<comment type="subcellular location">
    <subcellularLocation>
        <location evidence="10 11">Cell membrane</location>
        <topology evidence="2">Single-pass type I membrane protein</topology>
    </subcellularLocation>
</comment>
<comment type="alternative products">
    <event type="alternative splicing"/>
    <isoform>
        <id>Q92854-1</id>
        <name>1</name>
        <sequence type="displayed"/>
    </isoform>
    <isoform>
        <id>Q92854-2</id>
        <name>2</name>
        <sequence type="described" ref="VSP_039483 VSP_039484"/>
    </isoform>
</comment>
<comment type="tissue specificity">
    <text evidence="11">Strongly expressed in skeletal muscle, peripheral blood lymphocytes, spleen, and thymus and also expressed at lower levels in testes, brain, kidney, small intestine, prostate, heart, placenta, lung and pancreas, but not in colon and liver.</text>
</comment>
<comment type="similarity">
    <text evidence="12">Belongs to the semaphorin family.</text>
</comment>
<comment type="sequence caution" evidence="12">
    <conflict type="miscellaneous discrepancy">
        <sequence resource="EMBL-CDS" id="AAI37516"/>
    </conflict>
    <text>Cloning artifact.</text>
</comment>
<comment type="sequence caution" evidence="12">
    <conflict type="miscellaneous discrepancy">
        <sequence resource="EMBL-CDS" id="AAI37519"/>
    </conflict>
    <text>Cloning artifact.</text>
</comment>
<comment type="sequence caution" evidence="12">
    <conflict type="miscellaneous discrepancy">
        <sequence resource="EMBL-CDS" id="BAC04938"/>
    </conflict>
    <text>Cloning artifact.</text>
</comment>
<comment type="online information" name="Atlas of Genetics and Cytogenetics in Oncology and Haematology">
    <link uri="https://atlasgeneticsoncology.org/gene/42255/SEMA4D"/>
</comment>
<reference key="1">
    <citation type="journal article" date="1996" name="Proc. Natl. Acad. Sci. U.S.A.">
        <title>Human CD100, a novel leukocyte semaphorin that promotes B-cell aggregation and differentiation.</title>
        <authorList>
            <person name="Hall K.T."/>
            <person name="Boumsell L."/>
            <person name="Schultze J.L."/>
            <person name="Boussiotis V.A."/>
            <person name="Dorfman D.M."/>
            <person name="Cardoso A.A."/>
            <person name="Bensussan A."/>
            <person name="Nadler L.M."/>
            <person name="Freeman G.J."/>
        </authorList>
    </citation>
    <scope>NUCLEOTIDE SEQUENCE [MRNA] (ISOFORM 1)</scope>
    <scope>FUNCTION</scope>
    <scope>SUBCELLULAR LOCATION</scope>
    <scope>TISSUE SPECIFICITY</scope>
    <source>
        <tissue>T-cell</tissue>
    </source>
</reference>
<reference key="2">
    <citation type="journal article" date="2004" name="Nature">
        <title>DNA sequence and analysis of human chromosome 9.</title>
        <authorList>
            <person name="Humphray S.J."/>
            <person name="Oliver K."/>
            <person name="Hunt A.R."/>
            <person name="Plumb R.W."/>
            <person name="Loveland J.E."/>
            <person name="Howe K.L."/>
            <person name="Andrews T.D."/>
            <person name="Searle S."/>
            <person name="Hunt S.E."/>
            <person name="Scott C.E."/>
            <person name="Jones M.C."/>
            <person name="Ainscough R."/>
            <person name="Almeida J.P."/>
            <person name="Ambrose K.D."/>
            <person name="Ashwell R.I.S."/>
            <person name="Babbage A.K."/>
            <person name="Babbage S."/>
            <person name="Bagguley C.L."/>
            <person name="Bailey J."/>
            <person name="Banerjee R."/>
            <person name="Barker D.J."/>
            <person name="Barlow K.F."/>
            <person name="Bates K."/>
            <person name="Beasley H."/>
            <person name="Beasley O."/>
            <person name="Bird C.P."/>
            <person name="Bray-Allen S."/>
            <person name="Brown A.J."/>
            <person name="Brown J.Y."/>
            <person name="Burford D."/>
            <person name="Burrill W."/>
            <person name="Burton J."/>
            <person name="Carder C."/>
            <person name="Carter N.P."/>
            <person name="Chapman J.C."/>
            <person name="Chen Y."/>
            <person name="Clarke G."/>
            <person name="Clark S.Y."/>
            <person name="Clee C.M."/>
            <person name="Clegg S."/>
            <person name="Collier R.E."/>
            <person name="Corby N."/>
            <person name="Crosier M."/>
            <person name="Cummings A.T."/>
            <person name="Davies J."/>
            <person name="Dhami P."/>
            <person name="Dunn M."/>
            <person name="Dutta I."/>
            <person name="Dyer L.W."/>
            <person name="Earthrowl M.E."/>
            <person name="Faulkner L."/>
            <person name="Fleming C.J."/>
            <person name="Frankish A."/>
            <person name="Frankland J.A."/>
            <person name="French L."/>
            <person name="Fricker D.G."/>
            <person name="Garner P."/>
            <person name="Garnett J."/>
            <person name="Ghori J."/>
            <person name="Gilbert J.G.R."/>
            <person name="Glison C."/>
            <person name="Grafham D.V."/>
            <person name="Gribble S."/>
            <person name="Griffiths C."/>
            <person name="Griffiths-Jones S."/>
            <person name="Grocock R."/>
            <person name="Guy J."/>
            <person name="Hall R.E."/>
            <person name="Hammond S."/>
            <person name="Harley J.L."/>
            <person name="Harrison E.S.I."/>
            <person name="Hart E.A."/>
            <person name="Heath P.D."/>
            <person name="Henderson C.D."/>
            <person name="Hopkins B.L."/>
            <person name="Howard P.J."/>
            <person name="Howden P.J."/>
            <person name="Huckle E."/>
            <person name="Johnson C."/>
            <person name="Johnson D."/>
            <person name="Joy A.A."/>
            <person name="Kay M."/>
            <person name="Keenan S."/>
            <person name="Kershaw J.K."/>
            <person name="Kimberley A.M."/>
            <person name="King A."/>
            <person name="Knights A."/>
            <person name="Laird G.K."/>
            <person name="Langford C."/>
            <person name="Lawlor S."/>
            <person name="Leongamornlert D.A."/>
            <person name="Leversha M."/>
            <person name="Lloyd C."/>
            <person name="Lloyd D.M."/>
            <person name="Lovell J."/>
            <person name="Martin S."/>
            <person name="Mashreghi-Mohammadi M."/>
            <person name="Matthews L."/>
            <person name="McLaren S."/>
            <person name="McLay K.E."/>
            <person name="McMurray A."/>
            <person name="Milne S."/>
            <person name="Nickerson T."/>
            <person name="Nisbett J."/>
            <person name="Nordsiek G."/>
            <person name="Pearce A.V."/>
            <person name="Peck A.I."/>
            <person name="Porter K.M."/>
            <person name="Pandian R."/>
            <person name="Pelan S."/>
            <person name="Phillimore B."/>
            <person name="Povey S."/>
            <person name="Ramsey Y."/>
            <person name="Rand V."/>
            <person name="Scharfe M."/>
            <person name="Sehra H.K."/>
            <person name="Shownkeen R."/>
            <person name="Sims S.K."/>
            <person name="Skuce C.D."/>
            <person name="Smith M."/>
            <person name="Steward C.A."/>
            <person name="Swarbreck D."/>
            <person name="Sycamore N."/>
            <person name="Tester J."/>
            <person name="Thorpe A."/>
            <person name="Tracey A."/>
            <person name="Tromans A."/>
            <person name="Thomas D.W."/>
            <person name="Wall M."/>
            <person name="Wallis J.M."/>
            <person name="West A.P."/>
            <person name="Whitehead S.L."/>
            <person name="Willey D.L."/>
            <person name="Williams S.A."/>
            <person name="Wilming L."/>
            <person name="Wray P.W."/>
            <person name="Young L."/>
            <person name="Ashurst J.L."/>
            <person name="Coulson A."/>
            <person name="Blocker H."/>
            <person name="Durbin R.M."/>
            <person name="Sulston J.E."/>
            <person name="Hubbard T."/>
            <person name="Jackson M.J."/>
            <person name="Bentley D.R."/>
            <person name="Beck S."/>
            <person name="Rogers J."/>
            <person name="Dunham I."/>
        </authorList>
    </citation>
    <scope>NUCLEOTIDE SEQUENCE [LARGE SCALE GENOMIC DNA]</scope>
</reference>
<reference key="3">
    <citation type="journal article" date="2004" name="Genome Res.">
        <title>The status, quality, and expansion of the NIH full-length cDNA project: the Mammalian Gene Collection (MGC).</title>
        <authorList>
            <consortium name="The MGC Project Team"/>
        </authorList>
    </citation>
    <scope>NUCLEOTIDE SEQUENCE [LARGE SCALE MRNA] (ISOFORM 1)</scope>
    <scope>PARTIAL NUCLEOTIDE SEQUENCE [LARGE SCALE MRNA] (ISOFORM 2)</scope>
    <source>
        <tissue>Brain</tissue>
        <tissue>Eye</tissue>
    </source>
</reference>
<reference key="4">
    <citation type="journal article" date="2004" name="Nat. Genet.">
        <title>Complete sequencing and characterization of 21,243 full-length human cDNAs.</title>
        <authorList>
            <person name="Ota T."/>
            <person name="Suzuki Y."/>
            <person name="Nishikawa T."/>
            <person name="Otsuki T."/>
            <person name="Sugiyama T."/>
            <person name="Irie R."/>
            <person name="Wakamatsu A."/>
            <person name="Hayashi K."/>
            <person name="Sato H."/>
            <person name="Nagai K."/>
            <person name="Kimura K."/>
            <person name="Makita H."/>
            <person name="Sekine M."/>
            <person name="Obayashi M."/>
            <person name="Nishi T."/>
            <person name="Shibahara T."/>
            <person name="Tanaka T."/>
            <person name="Ishii S."/>
            <person name="Yamamoto J."/>
            <person name="Saito K."/>
            <person name="Kawai Y."/>
            <person name="Isono Y."/>
            <person name="Nakamura Y."/>
            <person name="Nagahari K."/>
            <person name="Murakami K."/>
            <person name="Yasuda T."/>
            <person name="Iwayanagi T."/>
            <person name="Wagatsuma M."/>
            <person name="Shiratori A."/>
            <person name="Sudo H."/>
            <person name="Hosoiri T."/>
            <person name="Kaku Y."/>
            <person name="Kodaira H."/>
            <person name="Kondo H."/>
            <person name="Sugawara M."/>
            <person name="Takahashi M."/>
            <person name="Kanda K."/>
            <person name="Yokoi T."/>
            <person name="Furuya T."/>
            <person name="Kikkawa E."/>
            <person name="Omura Y."/>
            <person name="Abe K."/>
            <person name="Kamihara K."/>
            <person name="Katsuta N."/>
            <person name="Sato K."/>
            <person name="Tanikawa M."/>
            <person name="Yamazaki M."/>
            <person name="Ninomiya K."/>
            <person name="Ishibashi T."/>
            <person name="Yamashita H."/>
            <person name="Murakawa K."/>
            <person name="Fujimori K."/>
            <person name="Tanai H."/>
            <person name="Kimata M."/>
            <person name="Watanabe M."/>
            <person name="Hiraoka S."/>
            <person name="Chiba Y."/>
            <person name="Ishida S."/>
            <person name="Ono Y."/>
            <person name="Takiguchi S."/>
            <person name="Watanabe S."/>
            <person name="Yosida M."/>
            <person name="Hotuta T."/>
            <person name="Kusano J."/>
            <person name="Kanehori K."/>
            <person name="Takahashi-Fujii A."/>
            <person name="Hara H."/>
            <person name="Tanase T.-O."/>
            <person name="Nomura Y."/>
            <person name="Togiya S."/>
            <person name="Komai F."/>
            <person name="Hara R."/>
            <person name="Takeuchi K."/>
            <person name="Arita M."/>
            <person name="Imose N."/>
            <person name="Musashino K."/>
            <person name="Yuuki H."/>
            <person name="Oshima A."/>
            <person name="Sasaki N."/>
            <person name="Aotsuka S."/>
            <person name="Yoshikawa Y."/>
            <person name="Matsunawa H."/>
            <person name="Ichihara T."/>
            <person name="Shiohata N."/>
            <person name="Sano S."/>
            <person name="Moriya S."/>
            <person name="Momiyama H."/>
            <person name="Satoh N."/>
            <person name="Takami S."/>
            <person name="Terashima Y."/>
            <person name="Suzuki O."/>
            <person name="Nakagawa S."/>
            <person name="Senoh A."/>
            <person name="Mizoguchi H."/>
            <person name="Goto Y."/>
            <person name="Shimizu F."/>
            <person name="Wakebe H."/>
            <person name="Hishigaki H."/>
            <person name="Watanabe T."/>
            <person name="Sugiyama A."/>
            <person name="Takemoto M."/>
            <person name="Kawakami B."/>
            <person name="Yamazaki M."/>
            <person name="Watanabe K."/>
            <person name="Kumagai A."/>
            <person name="Itakura S."/>
            <person name="Fukuzumi Y."/>
            <person name="Fujimori Y."/>
            <person name="Komiyama M."/>
            <person name="Tashiro H."/>
            <person name="Tanigami A."/>
            <person name="Fujiwara T."/>
            <person name="Ono T."/>
            <person name="Yamada K."/>
            <person name="Fujii Y."/>
            <person name="Ozaki K."/>
            <person name="Hirao M."/>
            <person name="Ohmori Y."/>
            <person name="Kawabata A."/>
            <person name="Hikiji T."/>
            <person name="Kobatake N."/>
            <person name="Inagaki H."/>
            <person name="Ikema Y."/>
            <person name="Okamoto S."/>
            <person name="Okitani R."/>
            <person name="Kawakami T."/>
            <person name="Noguchi S."/>
            <person name="Itoh T."/>
            <person name="Shigeta K."/>
            <person name="Senba T."/>
            <person name="Matsumura K."/>
            <person name="Nakajima Y."/>
            <person name="Mizuno T."/>
            <person name="Morinaga M."/>
            <person name="Sasaki M."/>
            <person name="Togashi T."/>
            <person name="Oyama M."/>
            <person name="Hata H."/>
            <person name="Watanabe M."/>
            <person name="Komatsu T."/>
            <person name="Mizushima-Sugano J."/>
            <person name="Satoh T."/>
            <person name="Shirai Y."/>
            <person name="Takahashi Y."/>
            <person name="Nakagawa K."/>
            <person name="Okumura K."/>
            <person name="Nagase T."/>
            <person name="Nomura N."/>
            <person name="Kikuchi H."/>
            <person name="Masuho Y."/>
            <person name="Yamashita R."/>
            <person name="Nakai K."/>
            <person name="Yada T."/>
            <person name="Nakamura Y."/>
            <person name="Ohara O."/>
            <person name="Isogai T."/>
            <person name="Sugano S."/>
        </authorList>
    </citation>
    <scope>PARTIAL NUCLEOTIDE SEQUENCE [LARGE SCALE MRNA] (ISOFORM 2)</scope>
    <source>
        <tissue>Small intestine</tissue>
    </source>
</reference>
<reference key="5">
    <citation type="journal article" date="1999" name="Cell">
        <title>Plexins are a large family of receptors for transmembrane, secreted and GPI-anchored semaphorins in vertebrates.</title>
        <authorList>
            <person name="Tamagnone L."/>
            <person name="Artigiani S."/>
            <person name="Chen H."/>
            <person name="He Z."/>
            <person name="Ming G.-L."/>
            <person name="Song H.-L."/>
            <person name="Chedotal A."/>
            <person name="Winberg M.L."/>
            <person name="Goodman C.S."/>
            <person name="Poo M.-M."/>
            <person name="Tessier-Lavigne M."/>
            <person name="Comoglio P.M."/>
        </authorList>
    </citation>
    <scope>INTERACTION WITH PLXNB1</scope>
</reference>
<reference key="6">
    <citation type="journal article" date="2005" name="Mol. Cell. Biol.">
        <title>Semaphorin 4D/plexin-B1 induces endothelial cell migration through the activation of PYK2, Src, and the phosphatidylinositol 3-kinase-Akt pathway.</title>
        <authorList>
            <person name="Basile J.R."/>
            <person name="Afkhami T."/>
            <person name="Gutkind J.S."/>
        </authorList>
    </citation>
    <scope>FUNCTION</scope>
</reference>
<reference key="7">
    <citation type="journal article" date="2006" name="Mol. Cell. Proteomics">
        <title>Elucidation of N-glycosylation sites on human platelet proteins: a glycoproteomic approach.</title>
        <authorList>
            <person name="Lewandrowski U."/>
            <person name="Moebius J."/>
            <person name="Walter U."/>
            <person name="Sickmann A."/>
        </authorList>
    </citation>
    <scope>GLYCOSYLATION [LARGE SCALE ANALYSIS] AT ASN-419</scope>
    <source>
        <tissue>Platelet</tissue>
    </source>
</reference>
<reference key="8">
    <citation type="journal article" date="2009" name="Eur. J. Neurosci.">
        <title>The semaphorin 4D-plexin-B signalling complex regulates dendritic and axonal complexity in developing neurons via diverse pathways.</title>
        <authorList>
            <person name="Vodrazka P."/>
            <person name="Korostylev A."/>
            <person name="Hirschberg A."/>
            <person name="Swiercz J.M."/>
            <person name="Worzfeld T."/>
            <person name="Deng S."/>
            <person name="Fazzari P."/>
            <person name="Tamagnone L."/>
            <person name="Offermanns S."/>
            <person name="Kuner R."/>
        </authorList>
    </citation>
    <scope>FUNCTION</scope>
</reference>
<reference key="9">
    <citation type="journal article" date="2009" name="Nat. Biotechnol.">
        <title>Mass-spectrometric identification and relative quantification of N-linked cell surface glycoproteins.</title>
        <authorList>
            <person name="Wollscheid B."/>
            <person name="Bausch-Fluck D."/>
            <person name="Henderson C."/>
            <person name="O'Brien R."/>
            <person name="Bibel M."/>
            <person name="Schiess R."/>
            <person name="Aebersold R."/>
            <person name="Watts J.D."/>
        </authorList>
    </citation>
    <scope>GLYCOSYLATION [LARGE SCALE ANALYSIS] AT ASN-49; ASN-77; ASN-379 AND ASN-419</scope>
    <source>
        <tissue>Leukemic T-cell</tissue>
    </source>
</reference>
<reference key="10">
    <citation type="journal article" date="2013" name="J. Proteome Res.">
        <title>Toward a comprehensive characterization of a human cancer cell phosphoproteome.</title>
        <authorList>
            <person name="Zhou H."/>
            <person name="Di Palma S."/>
            <person name="Preisinger C."/>
            <person name="Peng M."/>
            <person name="Polat A.N."/>
            <person name="Heck A.J."/>
            <person name="Mohammed S."/>
        </authorList>
    </citation>
    <scope>PHOSPHORYLATION [LARGE SCALE ANALYSIS] AT SER-833</scope>
    <scope>IDENTIFICATION BY MASS SPECTROMETRY [LARGE SCALE ANALYSIS]</scope>
    <source>
        <tissue>Cervix carcinoma</tissue>
    </source>
</reference>
<reference key="11">
    <citation type="journal article" date="2003" name="Nat. Struct. Biol.">
        <title>The ligand-binding face of the semaphorins revealed by the high-resolution crystal structure of SEMA4D.</title>
        <authorList>
            <person name="Love C.A."/>
            <person name="Harlos K."/>
            <person name="Mavaddat N."/>
            <person name="Davis S.J."/>
            <person name="Stuart D.I."/>
            <person name="Jones E.Y."/>
            <person name="Esnouf R.M."/>
        </authorList>
    </citation>
    <scope>X-RAY CRYSTALLOGRAPHY (2.0 ANGSTROMS) OF 24-684</scope>
    <scope>DISULFIDE BONDS</scope>
</reference>
<reference key="12">
    <citation type="journal article" date="2010" name="Nature">
        <title>Structural basis of semaphorin-plexin signalling.</title>
        <authorList>
            <person name="Janssen B.J."/>
            <person name="Robinson R.A."/>
            <person name="Perez-Branguli F."/>
            <person name="Bell C.H."/>
            <person name="Mitchell K.J."/>
            <person name="Siebold C."/>
            <person name="Jones E.Y."/>
        </authorList>
    </citation>
    <scope>X-RAY CRYSTALLOGRAPHY (2.99 ANGSTROMS) OF 22-677 IN COMPLEX WITH PLXNB1</scope>
    <scope>SUBUNIT</scope>
    <scope>FUNCTION</scope>
    <scope>SUBCELLULAR LOCATION</scope>
    <scope>MUTAGENESIS OF 100-LYS-GLY-101; 181-PHE-LEU-182; PHE-244; PHE-246 AND LYS-395</scope>
    <scope>GLYCOSYLATION AT ASN-49; ASN-77; ASN-139; ASN-191; ASN-329 AND ASN-419</scope>
    <scope>DISULFIDE BONDS</scope>
</reference>
<sequence length="862" mass="96150">MRMCTPIRGLLMALAVMFGTAMAFAPIPRITWEHREVHLVQFHEPDIYNYSALLLSEDKDTLYIGAREAVFAVNALNISEKQHEVYWKVSEDKKAKCAEKGKSKQTECLNYIRVLQPLSATSLYVCGTNAFQPACDHLNLTSFKFLGKNEDGKGRCPFDPAHSYTSVMVDGELYSGTSYNFLGSEPIISRNSSHSPLRTEYAIPWLNEPSFVFADVIRKSPDSPDGEDDRVYFFFTEVSVEYEFVFRVLIPRIARVCKGDQGGLRTLQKKWTSFLKARLICSRPDSGLVFNVLRDVFVLRSPGLKVPVFYALFTPQLNNVGLSAVCAYNLSTAEEVFSHGKYMQSTTVEQSHTKWVRYNGPVPKPRPGACIDSEARAANYTSSLNLPDKTLQFVKDHPLMDDSVTPIDNRPRLIKKDVNYTQIVVDRTQALDGTVYDVMFVSTDRGALHKAISLEHAVHIIEETQLFQDFEPVQTLLLSSKKGNRFVYAGSNSGVVQAPLAFCGKHGTCEDCVLARDPYCAWSPPTATCVALHQTESPSRGLIQEMSGDASVCPDKSKGSYRQHFFKHGGTAELKCSQKSNLARVFWKFQNGVLKAESPKYGLMGRKNLLIFNLSEGDSGVYQCLSEERVKNKTVFQVVAKHVLEVKVVPKPVVAPTLSVVQTEGSRIATKVLVASTQGSSPPTPAVQATSSGAITLPPKPAPTGTSCEPKIVINTVPQLHSEKTMYLKSSDNRLLMSLFLFFFVLFLCLFFYNCYKGYLPRQCLKFRSALLIGKKKPKSDFCDREQSLKETLVEPGSFSQQNGEHPKPALDTGYETEQDTITSKVPTDREDSQRIDDLSARDKPFDVKCELKFADSDADGD</sequence>
<organism>
    <name type="scientific">Homo sapiens</name>
    <name type="common">Human</name>
    <dbReference type="NCBI Taxonomy" id="9606"/>
    <lineage>
        <taxon>Eukaryota</taxon>
        <taxon>Metazoa</taxon>
        <taxon>Chordata</taxon>
        <taxon>Craniata</taxon>
        <taxon>Vertebrata</taxon>
        <taxon>Euteleostomi</taxon>
        <taxon>Mammalia</taxon>
        <taxon>Eutheria</taxon>
        <taxon>Euarchontoglires</taxon>
        <taxon>Primates</taxon>
        <taxon>Haplorrhini</taxon>
        <taxon>Catarrhini</taxon>
        <taxon>Hominidae</taxon>
        <taxon>Homo</taxon>
    </lineage>
</organism>